<name>RS12_RHOE4</name>
<gene>
    <name evidence="2" type="primary">rpsL</name>
    <name type="ordered locus">RER_17610</name>
</gene>
<keyword id="KW-0488">Methylation</keyword>
<keyword id="KW-0687">Ribonucleoprotein</keyword>
<keyword id="KW-0689">Ribosomal protein</keyword>
<keyword id="KW-0694">RNA-binding</keyword>
<keyword id="KW-0699">rRNA-binding</keyword>
<keyword id="KW-0820">tRNA-binding</keyword>
<accession>C0ZVT4</accession>
<organism>
    <name type="scientific">Rhodococcus erythropolis (strain PR4 / NBRC 100887)</name>
    <dbReference type="NCBI Taxonomy" id="234621"/>
    <lineage>
        <taxon>Bacteria</taxon>
        <taxon>Bacillati</taxon>
        <taxon>Actinomycetota</taxon>
        <taxon>Actinomycetes</taxon>
        <taxon>Mycobacteriales</taxon>
        <taxon>Nocardiaceae</taxon>
        <taxon>Rhodococcus</taxon>
        <taxon>Rhodococcus erythropolis group</taxon>
    </lineage>
</organism>
<protein>
    <recommendedName>
        <fullName evidence="2">Small ribosomal subunit protein uS12</fullName>
    </recommendedName>
    <alternativeName>
        <fullName evidence="4">30S ribosomal protein S12</fullName>
    </alternativeName>
</protein>
<reference key="1">
    <citation type="submission" date="2005-03" db="EMBL/GenBank/DDBJ databases">
        <title>Comparison of the complete genome sequences of Rhodococcus erythropolis PR4 and Rhodococcus opacus B4.</title>
        <authorList>
            <person name="Takarada H."/>
            <person name="Sekine M."/>
            <person name="Hosoyama A."/>
            <person name="Yamada R."/>
            <person name="Fujisawa T."/>
            <person name="Omata S."/>
            <person name="Shimizu A."/>
            <person name="Tsukatani N."/>
            <person name="Tanikawa S."/>
            <person name="Fujita N."/>
            <person name="Harayama S."/>
        </authorList>
    </citation>
    <scope>NUCLEOTIDE SEQUENCE [LARGE SCALE GENOMIC DNA]</scope>
    <source>
        <strain>PR4 / NBRC 100887</strain>
    </source>
</reference>
<dbReference type="EMBL" id="AP008957">
    <property type="protein sequence ID" value="BAH32469.1"/>
    <property type="molecule type" value="Genomic_DNA"/>
</dbReference>
<dbReference type="RefSeq" id="WP_003941908.1">
    <property type="nucleotide sequence ID" value="NC_012490.1"/>
</dbReference>
<dbReference type="SMR" id="C0ZVT4"/>
<dbReference type="GeneID" id="93802298"/>
<dbReference type="KEGG" id="rer:RER_17610"/>
<dbReference type="eggNOG" id="COG0048">
    <property type="taxonomic scope" value="Bacteria"/>
</dbReference>
<dbReference type="HOGENOM" id="CLU_104295_1_2_11"/>
<dbReference type="Proteomes" id="UP000002204">
    <property type="component" value="Chromosome"/>
</dbReference>
<dbReference type="GO" id="GO:0015935">
    <property type="term" value="C:small ribosomal subunit"/>
    <property type="evidence" value="ECO:0007669"/>
    <property type="project" value="InterPro"/>
</dbReference>
<dbReference type="GO" id="GO:0019843">
    <property type="term" value="F:rRNA binding"/>
    <property type="evidence" value="ECO:0007669"/>
    <property type="project" value="UniProtKB-UniRule"/>
</dbReference>
<dbReference type="GO" id="GO:0003735">
    <property type="term" value="F:structural constituent of ribosome"/>
    <property type="evidence" value="ECO:0007669"/>
    <property type="project" value="InterPro"/>
</dbReference>
<dbReference type="GO" id="GO:0000049">
    <property type="term" value="F:tRNA binding"/>
    <property type="evidence" value="ECO:0007669"/>
    <property type="project" value="UniProtKB-UniRule"/>
</dbReference>
<dbReference type="GO" id="GO:0006412">
    <property type="term" value="P:translation"/>
    <property type="evidence" value="ECO:0007669"/>
    <property type="project" value="UniProtKB-UniRule"/>
</dbReference>
<dbReference type="CDD" id="cd03368">
    <property type="entry name" value="Ribosomal_S12"/>
    <property type="match status" value="1"/>
</dbReference>
<dbReference type="FunFam" id="2.40.50.140:FF:000001">
    <property type="entry name" value="30S ribosomal protein S12"/>
    <property type="match status" value="1"/>
</dbReference>
<dbReference type="Gene3D" id="2.40.50.140">
    <property type="entry name" value="Nucleic acid-binding proteins"/>
    <property type="match status" value="1"/>
</dbReference>
<dbReference type="HAMAP" id="MF_00403_B">
    <property type="entry name" value="Ribosomal_uS12_B"/>
    <property type="match status" value="1"/>
</dbReference>
<dbReference type="InterPro" id="IPR012340">
    <property type="entry name" value="NA-bd_OB-fold"/>
</dbReference>
<dbReference type="InterPro" id="IPR006032">
    <property type="entry name" value="Ribosomal_uS12"/>
</dbReference>
<dbReference type="InterPro" id="IPR005679">
    <property type="entry name" value="Ribosomal_uS12_bac"/>
</dbReference>
<dbReference type="NCBIfam" id="TIGR00981">
    <property type="entry name" value="rpsL_bact"/>
    <property type="match status" value="1"/>
</dbReference>
<dbReference type="PANTHER" id="PTHR11652">
    <property type="entry name" value="30S RIBOSOMAL PROTEIN S12 FAMILY MEMBER"/>
    <property type="match status" value="1"/>
</dbReference>
<dbReference type="Pfam" id="PF00164">
    <property type="entry name" value="Ribosom_S12_S23"/>
    <property type="match status" value="1"/>
</dbReference>
<dbReference type="PIRSF" id="PIRSF002133">
    <property type="entry name" value="Ribosomal_S12/S23"/>
    <property type="match status" value="1"/>
</dbReference>
<dbReference type="PRINTS" id="PR01034">
    <property type="entry name" value="RIBOSOMALS12"/>
</dbReference>
<dbReference type="SUPFAM" id="SSF50249">
    <property type="entry name" value="Nucleic acid-binding proteins"/>
    <property type="match status" value="1"/>
</dbReference>
<dbReference type="PROSITE" id="PS00055">
    <property type="entry name" value="RIBOSOMAL_S12"/>
    <property type="match status" value="1"/>
</dbReference>
<sequence length="124" mass="13781">MPTINQLVRKGRRDKTAKVKTAALKGSPQRRGVCTRVYTTTPKKPNSALRKVARVRLTTSVEVTAYIPGEGHNLQEHSMVLVRGGRVKDLPGVRYKIIRGSLDTQGVKGRKQARSRYGAKKEKS</sequence>
<evidence type="ECO:0000250" key="1"/>
<evidence type="ECO:0000255" key="2">
    <source>
        <dbReference type="HAMAP-Rule" id="MF_00403"/>
    </source>
</evidence>
<evidence type="ECO:0000256" key="3">
    <source>
        <dbReference type="SAM" id="MobiDB-lite"/>
    </source>
</evidence>
<evidence type="ECO:0000305" key="4"/>
<proteinExistence type="inferred from homology"/>
<feature type="chain" id="PRO_1000205924" description="Small ribosomal subunit protein uS12">
    <location>
        <begin position="1"/>
        <end position="124"/>
    </location>
</feature>
<feature type="region of interest" description="Disordered" evidence="3">
    <location>
        <begin position="1"/>
        <end position="32"/>
    </location>
</feature>
<feature type="region of interest" description="Disordered" evidence="3">
    <location>
        <begin position="104"/>
        <end position="124"/>
    </location>
</feature>
<feature type="compositionally biased region" description="Basic residues" evidence="3">
    <location>
        <begin position="108"/>
        <end position="118"/>
    </location>
</feature>
<feature type="modified residue" description="3-methylthioaspartic acid" evidence="1">
    <location>
        <position position="89"/>
    </location>
</feature>
<comment type="function">
    <text evidence="2">With S4 and S5 plays an important role in translational accuracy.</text>
</comment>
<comment type="function">
    <text evidence="2">Interacts with and stabilizes bases of the 16S rRNA that are involved in tRNA selection in the A site and with the mRNA backbone. Located at the interface of the 30S and 50S subunits, it traverses the body of the 30S subunit contacting proteins on the other side and probably holding the rRNA structure together. The combined cluster of proteins S8, S12 and S17 appears to hold together the shoulder and platform of the 30S subunit.</text>
</comment>
<comment type="subunit">
    <text evidence="2">Part of the 30S ribosomal subunit. Contacts proteins S8 and S17. May interact with IF1 in the 30S initiation complex.</text>
</comment>
<comment type="similarity">
    <text evidence="2">Belongs to the universal ribosomal protein uS12 family.</text>
</comment>